<reference key="1">
    <citation type="journal article" date="2008" name="DNA Res.">
        <title>Complete genome sequence and comparative analysis of the wild-type commensal Escherichia coli strain SE11 isolated from a healthy adult.</title>
        <authorList>
            <person name="Oshima K."/>
            <person name="Toh H."/>
            <person name="Ogura Y."/>
            <person name="Sasamoto H."/>
            <person name="Morita H."/>
            <person name="Park S.-H."/>
            <person name="Ooka T."/>
            <person name="Iyoda S."/>
            <person name="Taylor T.D."/>
            <person name="Hayashi T."/>
            <person name="Itoh K."/>
            <person name="Hattori M."/>
        </authorList>
    </citation>
    <scope>NUCLEOTIDE SEQUENCE [LARGE SCALE GENOMIC DNA]</scope>
    <source>
        <strain>SE11</strain>
    </source>
</reference>
<evidence type="ECO:0000255" key="1">
    <source>
        <dbReference type="HAMAP-Rule" id="MF_01519"/>
    </source>
</evidence>
<gene>
    <name evidence="1" type="primary">yaeH</name>
    <name type="ordered locus">ECSE_0164</name>
</gene>
<sequence>MYDNLKSLGITNPEEIDRYSLRQEANNDILKIYFQKDKGEFFAKSVKFKYPRQRKTVVADGVGQGYKEVQEISPNLRYIIDELDQICQRDRSEVDLKRKILDDLRHLESVVTNKISEIEADLEKLTRK</sequence>
<dbReference type="EMBL" id="AP009240">
    <property type="protein sequence ID" value="BAG75688.1"/>
    <property type="molecule type" value="Genomic_DNA"/>
</dbReference>
<dbReference type="RefSeq" id="WP_000272188.1">
    <property type="nucleotide sequence ID" value="NC_011415.1"/>
</dbReference>
<dbReference type="SMR" id="B6HZD9"/>
<dbReference type="KEGG" id="ecy:ECSE_0164"/>
<dbReference type="HOGENOM" id="CLU_136774_0_0_6"/>
<dbReference type="Proteomes" id="UP000008199">
    <property type="component" value="Chromosome"/>
</dbReference>
<dbReference type="HAMAP" id="MF_01519">
    <property type="entry name" value="UPF0325"/>
    <property type="match status" value="1"/>
</dbReference>
<dbReference type="InterPro" id="IPR020911">
    <property type="entry name" value="UPF0325"/>
</dbReference>
<dbReference type="NCBIfam" id="NF010213">
    <property type="entry name" value="PRK13677.1"/>
    <property type="match status" value="1"/>
</dbReference>
<dbReference type="Pfam" id="PF11944">
    <property type="entry name" value="DUF3461"/>
    <property type="match status" value="1"/>
</dbReference>
<feature type="chain" id="PRO_1000198425" description="UPF0325 protein YaeH">
    <location>
        <begin position="1"/>
        <end position="128"/>
    </location>
</feature>
<organism>
    <name type="scientific">Escherichia coli (strain SE11)</name>
    <dbReference type="NCBI Taxonomy" id="409438"/>
    <lineage>
        <taxon>Bacteria</taxon>
        <taxon>Pseudomonadati</taxon>
        <taxon>Pseudomonadota</taxon>
        <taxon>Gammaproteobacteria</taxon>
        <taxon>Enterobacterales</taxon>
        <taxon>Enterobacteriaceae</taxon>
        <taxon>Escherichia</taxon>
    </lineage>
</organism>
<accession>B6HZD9</accession>
<name>YAEH_ECOSE</name>
<comment type="similarity">
    <text evidence="1">Belongs to the UPF0325 family.</text>
</comment>
<protein>
    <recommendedName>
        <fullName evidence="1">UPF0325 protein YaeH</fullName>
    </recommendedName>
</protein>
<proteinExistence type="inferred from homology"/>